<comment type="similarity">
    <text evidence="2">In the N-terminal section; belongs to the UPF0276 family.</text>
</comment>
<sequence length="487" mass="51638">MVEEGTMERLRTLGTLGTGIGWRPEIADAVERMPGIDWVEAVAENVCPGHLPESLLRLRARGVTVVPHGVSLGLGGADRPDEGRLAALAERAEALGSPLVTEHIAFVRAGGALTASPLLEAGHLLPVPRTRDALDVLCENVRIAQAALPVPLAVENIAALISWPGEEMTEGQFLYDLVERTGVRLLIDVANLHTNHVNRGEDPAKALDELPVEAIAYVHVAGGFERDGVWHDSHAHPVPQPVLDILADLASRTTPPGVLLERDENFPEPGELERELGAIRKTLEKAGTRAGASAGAAGAATRTAAELTVAESTAVGAIAGPRRGGADAQAAPRAAGTEALSAASTSTPADPARQRLALAQAALLSALVAGTPVPEGFDRVRLGVQARALAAKRADVVAKVAPELPEILAEEYRPAFLTYAPGHPMTGGYRRDALDFAEHLLLAGRPEDAEARRRLRDWWLERSGPTPPSRHPAARLARATRRVLLRR</sequence>
<name>Y2218_STRAW</name>
<keyword id="KW-1185">Reference proteome</keyword>
<gene>
    <name type="ordered locus">SAV_2218</name>
</gene>
<organism>
    <name type="scientific">Streptomyces avermitilis (strain ATCC 31267 / DSM 46492 / JCM 5070 / NBRC 14893 / NCIMB 12804 / NRRL 8165 / MA-4680)</name>
    <dbReference type="NCBI Taxonomy" id="227882"/>
    <lineage>
        <taxon>Bacteria</taxon>
        <taxon>Bacillati</taxon>
        <taxon>Actinomycetota</taxon>
        <taxon>Actinomycetes</taxon>
        <taxon>Kitasatosporales</taxon>
        <taxon>Streptomycetaceae</taxon>
        <taxon>Streptomyces</taxon>
    </lineage>
</organism>
<feature type="chain" id="PRO_0000192708" description="UPF0276 protein SAV_2218">
    <location>
        <begin position="1"/>
        <end position="487"/>
    </location>
</feature>
<feature type="region of interest" description="UPF0276">
    <location>
        <begin position="1"/>
        <end position="285"/>
    </location>
</feature>
<feature type="region of interest" description="Unknown">
    <location>
        <begin position="286"/>
        <end position="487"/>
    </location>
</feature>
<feature type="region of interest" description="Disordered" evidence="1">
    <location>
        <begin position="319"/>
        <end position="348"/>
    </location>
</feature>
<feature type="compositionally biased region" description="Low complexity" evidence="1">
    <location>
        <begin position="326"/>
        <end position="348"/>
    </location>
</feature>
<reference key="1">
    <citation type="journal article" date="2001" name="Proc. Natl. Acad. Sci. U.S.A.">
        <title>Genome sequence of an industrial microorganism Streptomyces avermitilis: deducing the ability of producing secondary metabolites.</title>
        <authorList>
            <person name="Omura S."/>
            <person name="Ikeda H."/>
            <person name="Ishikawa J."/>
            <person name="Hanamoto A."/>
            <person name="Takahashi C."/>
            <person name="Shinose M."/>
            <person name="Takahashi Y."/>
            <person name="Horikawa H."/>
            <person name="Nakazawa H."/>
            <person name="Osonoe T."/>
            <person name="Kikuchi H."/>
            <person name="Shiba T."/>
            <person name="Sakaki Y."/>
            <person name="Hattori M."/>
        </authorList>
    </citation>
    <scope>NUCLEOTIDE SEQUENCE [LARGE SCALE GENOMIC DNA]</scope>
    <source>
        <strain>ATCC 31267 / DSM 46492 / JCM 5070 / NBRC 14893 / NCIMB 12804 / NRRL 8165 / MA-4680</strain>
    </source>
</reference>
<reference key="2">
    <citation type="journal article" date="2003" name="Nat. Biotechnol.">
        <title>Complete genome sequence and comparative analysis of the industrial microorganism Streptomyces avermitilis.</title>
        <authorList>
            <person name="Ikeda H."/>
            <person name="Ishikawa J."/>
            <person name="Hanamoto A."/>
            <person name="Shinose M."/>
            <person name="Kikuchi H."/>
            <person name="Shiba T."/>
            <person name="Sakaki Y."/>
            <person name="Hattori M."/>
            <person name="Omura S."/>
        </authorList>
    </citation>
    <scope>NUCLEOTIDE SEQUENCE [LARGE SCALE GENOMIC DNA]</scope>
    <source>
        <strain>ATCC 31267 / DSM 46492 / JCM 5070 / NBRC 14893 / NCIMB 12804 / NRRL 8165 / MA-4680</strain>
    </source>
</reference>
<evidence type="ECO:0000256" key="1">
    <source>
        <dbReference type="SAM" id="MobiDB-lite"/>
    </source>
</evidence>
<evidence type="ECO:0000305" key="2"/>
<proteinExistence type="inferred from homology"/>
<accession>Q82KZ4</accession>
<dbReference type="EMBL" id="BA000030">
    <property type="protein sequence ID" value="BAC69929.1"/>
    <property type="molecule type" value="Genomic_DNA"/>
</dbReference>
<dbReference type="SMR" id="Q82KZ4"/>
<dbReference type="KEGG" id="sma:SAVERM_2218"/>
<dbReference type="eggNOG" id="COG3220">
    <property type="taxonomic scope" value="Bacteria"/>
</dbReference>
<dbReference type="HOGENOM" id="CLU_620995_0_0_11"/>
<dbReference type="Proteomes" id="UP000000428">
    <property type="component" value="Chromosome"/>
</dbReference>
<dbReference type="Gene3D" id="3.20.20.150">
    <property type="entry name" value="Divalent-metal-dependent TIM barrel enzymes"/>
    <property type="match status" value="1"/>
</dbReference>
<dbReference type="InterPro" id="IPR007801">
    <property type="entry name" value="MbnB/TglH/ChrH"/>
</dbReference>
<dbReference type="InterPro" id="IPR036237">
    <property type="entry name" value="Xyl_isomerase-like_sf"/>
</dbReference>
<dbReference type="NCBIfam" id="NF003818">
    <property type="entry name" value="PRK05409.1"/>
    <property type="match status" value="1"/>
</dbReference>
<dbReference type="PANTHER" id="PTHR42194">
    <property type="entry name" value="UPF0276 PROTEIN HI_1600"/>
    <property type="match status" value="1"/>
</dbReference>
<dbReference type="PANTHER" id="PTHR42194:SF1">
    <property type="entry name" value="UPF0276 PROTEIN HI_1600"/>
    <property type="match status" value="1"/>
</dbReference>
<dbReference type="Pfam" id="PF05114">
    <property type="entry name" value="MbnB_TglH_ChrH"/>
    <property type="match status" value="1"/>
</dbReference>
<dbReference type="SUPFAM" id="SSF51658">
    <property type="entry name" value="Xylose isomerase-like"/>
    <property type="match status" value="1"/>
</dbReference>
<protein>
    <recommendedName>
        <fullName>UPF0276 protein SAV_2218</fullName>
    </recommendedName>
</protein>